<reference key="1">
    <citation type="journal article" date="2000" name="Nature">
        <title>Complete genome sequence of Pseudomonas aeruginosa PAO1, an opportunistic pathogen.</title>
        <authorList>
            <person name="Stover C.K."/>
            <person name="Pham X.-Q.T."/>
            <person name="Erwin A.L."/>
            <person name="Mizoguchi S.D."/>
            <person name="Warrener P."/>
            <person name="Hickey M.J."/>
            <person name="Brinkman F.S.L."/>
            <person name="Hufnagle W.O."/>
            <person name="Kowalik D.J."/>
            <person name="Lagrou M."/>
            <person name="Garber R.L."/>
            <person name="Goltry L."/>
            <person name="Tolentino E."/>
            <person name="Westbrock-Wadman S."/>
            <person name="Yuan Y."/>
            <person name="Brody L.L."/>
            <person name="Coulter S.N."/>
            <person name="Folger K.R."/>
            <person name="Kas A."/>
            <person name="Larbig K."/>
            <person name="Lim R.M."/>
            <person name="Smith K.A."/>
            <person name="Spencer D.H."/>
            <person name="Wong G.K.-S."/>
            <person name="Wu Z."/>
            <person name="Paulsen I.T."/>
            <person name="Reizer J."/>
            <person name="Saier M.H. Jr."/>
            <person name="Hancock R.E.W."/>
            <person name="Lory S."/>
            <person name="Olson M.V."/>
        </authorList>
    </citation>
    <scope>NUCLEOTIDE SEQUENCE [LARGE SCALE GENOMIC DNA]</scope>
    <source>
        <strain>ATCC 15692 / DSM 22644 / CIP 104116 / JCM 14847 / LMG 12228 / 1C / PRS 101 / PAO1</strain>
    </source>
</reference>
<reference key="2">
    <citation type="journal article" date="2005" name="Mol. Microbiol.">
        <title>Pseudomonas aeruginosa fimL regulates multiple virulence functions by intersecting with Vfr-modulated pathways.</title>
        <authorList>
            <person name="Whitchurch C.B."/>
            <person name="Beatson S.A."/>
            <person name="Comolli J.C."/>
            <person name="Jakobsen T."/>
            <person name="Sargent J.L."/>
            <person name="Bertrand J.J."/>
            <person name="West J."/>
            <person name="Klausen M."/>
            <person name="Waite L.L."/>
            <person name="Kang P.J."/>
            <person name="Tolker-Nielsen T."/>
            <person name="Mattick J.S."/>
            <person name="Engel J.N."/>
        </authorList>
    </citation>
    <scope>FUNCTION</scope>
    <scope>DISRUPTION PHENOTYPE</scope>
    <source>
        <strain>ATCC 15692 / DSM 22644 / CIP 104116 / JCM 14847 / LMG 12228 / 1C / PRS 101 / PAO1</strain>
    </source>
</reference>
<reference key="3">
    <citation type="journal article" date="2011" name="PLoS ONE">
        <title>FimL regulates cAMP synthesis in Pseudomonas aeruginosa.</title>
        <authorList>
            <person name="Inclan Y.F."/>
            <person name="Huseby M.J."/>
            <person name="Engel J.N."/>
        </authorList>
    </citation>
    <scope>FUNCTION</scope>
    <scope>DISRUPTION PHENOTYPE</scope>
    <source>
        <strain>ATCC 15692 / DSM 22644 / CIP 104116 / JCM 14847 / LMG 12228 / 1C / PRS 101 / PAO1</strain>
    </source>
</reference>
<reference key="4">
    <citation type="journal article" date="2016" name="Mol. Microbiol.">
        <title>A scaffold protein connects type IV pili with the Chp chemosensory system to mediate activation of virulence signaling in Pseudomonas aeruginosa.</title>
        <authorList>
            <person name="Inclan Y.F."/>
            <person name="Persat A."/>
            <person name="Greninger A."/>
            <person name="Von Dollen J."/>
            <person name="Johnson J."/>
            <person name="Krogan N."/>
            <person name="Gitai Z."/>
            <person name="Engel J.N."/>
        </authorList>
    </citation>
    <scope>FUNCTION</scope>
    <scope>INTERACTION WITH PILG AND FIMV</scope>
    <scope>DISRUPTION PHENOTYPE</scope>
    <scope>SUBCELLULAR LOCATION</scope>
    <source>
        <strain>ATCC 15692 / DSM 22644 / CIP 104116 / JCM 14847 / LMG 12228 / 1C / PRS 101 / PAO1</strain>
    </source>
</reference>
<proteinExistence type="evidence at protein level"/>
<evidence type="ECO:0000269" key="1">
    <source>
    </source>
</evidence>
<evidence type="ECO:0000269" key="2">
    <source>
    </source>
</evidence>
<evidence type="ECO:0000269" key="3">
    <source>
    </source>
</evidence>
<evidence type="ECO:0000303" key="4">
    <source>
    </source>
</evidence>
<feature type="chain" id="PRO_0000450453" description="Scaffold protein FimL">
    <location>
        <begin position="1"/>
        <end position="562"/>
    </location>
</feature>
<dbReference type="EMBL" id="AE004091">
    <property type="protein sequence ID" value="AAG05211.1"/>
    <property type="molecule type" value="Genomic_DNA"/>
</dbReference>
<dbReference type="PIR" id="H83418">
    <property type="entry name" value="H83418"/>
</dbReference>
<dbReference type="RefSeq" id="NP_250513.1">
    <property type="nucleotide sequence ID" value="NC_002516.2"/>
</dbReference>
<dbReference type="RefSeq" id="WP_003098159.1">
    <property type="nucleotide sequence ID" value="NZ_QZGE01000003.1"/>
</dbReference>
<dbReference type="SMR" id="Q9I2S3"/>
<dbReference type="STRING" id="208964.PA1822"/>
<dbReference type="PaxDb" id="208964-PA1822"/>
<dbReference type="GeneID" id="881776"/>
<dbReference type="KEGG" id="pae:PA1822"/>
<dbReference type="PATRIC" id="fig|208964.12.peg.1892"/>
<dbReference type="PseudoCAP" id="PA1822"/>
<dbReference type="HOGENOM" id="CLU_017911_1_0_6"/>
<dbReference type="InParanoid" id="Q9I2S3"/>
<dbReference type="OrthoDB" id="9803176at2"/>
<dbReference type="BioCyc" id="PAER208964:G1FZ6-1860-MONOMER"/>
<dbReference type="Proteomes" id="UP000002438">
    <property type="component" value="Chromosome"/>
</dbReference>
<dbReference type="GO" id="GO:0005737">
    <property type="term" value="C:cytoplasm"/>
    <property type="evidence" value="ECO:0007669"/>
    <property type="project" value="UniProtKB-SubCell"/>
</dbReference>
<dbReference type="GO" id="GO:0000160">
    <property type="term" value="P:phosphorelay signal transduction system"/>
    <property type="evidence" value="ECO:0007669"/>
    <property type="project" value="InterPro"/>
</dbReference>
<dbReference type="InterPro" id="IPR036641">
    <property type="entry name" value="HPT_dom_sf"/>
</dbReference>
<dbReference type="SUPFAM" id="SSF47226">
    <property type="entry name" value="Histidine-containing phosphotransfer domain, HPT domain"/>
    <property type="match status" value="1"/>
</dbReference>
<sequence length="562" mass="60869">MVTGATSLSLVRDELFATMEQAEQGLEQFIAERQNGSLLQHAVECLQQIRGTLNLIELAGAELLAQEALQLATDIPTGVSEERDGQLAALGNALYVLRRYLENVEANRQEIPELLLPAINEVRCAAGQPALPESFFFSARLDIPRPPSTAIDHLPSEAELGEESRRMRHMYQIGLLGLIREQNLYPSLKLMGRALARLDSLHGGVARSRLCWIGAAAIESIVDGQLLPRKSRKQLFSRIDRELKQLLIGPAYEAPRHLLKELLYLVALSDGQGPRSREVRELHGLAPLPFTDHLLEEESQRLSGPGQSVMRSLSTAIREELAGVKDMLDLIERGVAQPDSLTNLHAQLGKLSKTLGMVGLNSAGTALQTQLPTVAAWAASGVADSPPALLRLADAVLYVESMVGNLERGERRIIRPTPAEPGQEADAFAVHQLAEARIVVIEEAKAGLALAKRAITAYLESNGDKLNLANVPASLQAVRGGLWFLGQERAALLVGGCADYIQQRMIETAQMPSEQMLETLADALTSLEYYLEGGAVLRPQGQPDVLDLASASVKALGLPVAA</sequence>
<comment type="function">
    <text evidence="1 2 3">Regulates multiple virulence functions including type IV pilus (T4P)-mediated assembly and twitching motility as well as cAMP-dependent virulence gene expression (PubMed:15720546). Regulates intracellular cyclic AMP (cAMP) levels through the activation of adenylate cyclase CyaB (PubMed:21264306). Also functions as a scaffold linking FimV and PilG at the pole, where type IV pilus (T4P), the Chp chemosensory system and the CyaB adenylate cyclase interact (PubMed:27145134).</text>
</comment>
<comment type="subunit">
    <text evidence="3">Interacts with PilG and FimV.</text>
</comment>
<comment type="subcellular location">
    <subcellularLocation>
        <location evidence="3">Cytoplasm</location>
    </subcellularLocation>
    <text evidence="3">Localizes to poles in a FimV-dependent manner.</text>
</comment>
<comment type="disruption phenotype">
    <text evidence="1 3">Mutants show increased autolysis, reduced levels of surface-assembled type IV pili, twitching motility and diminished production of type III secreted effector.</text>
</comment>
<gene>
    <name type="primary">fimL</name>
    <name type="ordered locus">PA1822</name>
</gene>
<name>FIML_PSEAE</name>
<protein>
    <recommendedName>
        <fullName evidence="4">Scaffold protein FimL</fullName>
    </recommendedName>
</protein>
<keyword id="KW-0963">Cytoplasm</keyword>
<keyword id="KW-1185">Reference proteome</keyword>
<organism>
    <name type="scientific">Pseudomonas aeruginosa (strain ATCC 15692 / DSM 22644 / CIP 104116 / JCM 14847 / LMG 12228 / 1C / PRS 101 / PAO1)</name>
    <dbReference type="NCBI Taxonomy" id="208964"/>
    <lineage>
        <taxon>Bacteria</taxon>
        <taxon>Pseudomonadati</taxon>
        <taxon>Pseudomonadota</taxon>
        <taxon>Gammaproteobacteria</taxon>
        <taxon>Pseudomonadales</taxon>
        <taxon>Pseudomonadaceae</taxon>
        <taxon>Pseudomonas</taxon>
    </lineage>
</organism>
<accession>Q9I2S3</accession>